<proteinExistence type="inferred from homology"/>
<dbReference type="EC" id="2.7.1.71" evidence="1"/>
<dbReference type="EMBL" id="CP000305">
    <property type="protein sequence ID" value="ABG20241.1"/>
    <property type="molecule type" value="Genomic_DNA"/>
</dbReference>
<dbReference type="EMBL" id="ACNQ01000019">
    <property type="protein sequence ID" value="EEO74834.1"/>
    <property type="molecule type" value="Genomic_DNA"/>
</dbReference>
<dbReference type="RefSeq" id="WP_002208899.1">
    <property type="nucleotide sequence ID" value="NZ_ACNQ01000019.1"/>
</dbReference>
<dbReference type="SMR" id="Q1CCN9"/>
<dbReference type="GeneID" id="96663260"/>
<dbReference type="KEGG" id="ypn:YPN_3914"/>
<dbReference type="HOGENOM" id="CLU_057607_2_2_6"/>
<dbReference type="UniPathway" id="UPA00053">
    <property type="reaction ID" value="UER00088"/>
</dbReference>
<dbReference type="Proteomes" id="UP000008936">
    <property type="component" value="Chromosome"/>
</dbReference>
<dbReference type="GO" id="GO:0005829">
    <property type="term" value="C:cytosol"/>
    <property type="evidence" value="ECO:0007669"/>
    <property type="project" value="TreeGrafter"/>
</dbReference>
<dbReference type="GO" id="GO:0005524">
    <property type="term" value="F:ATP binding"/>
    <property type="evidence" value="ECO:0007669"/>
    <property type="project" value="UniProtKB-UniRule"/>
</dbReference>
<dbReference type="GO" id="GO:0000287">
    <property type="term" value="F:magnesium ion binding"/>
    <property type="evidence" value="ECO:0007669"/>
    <property type="project" value="UniProtKB-UniRule"/>
</dbReference>
<dbReference type="GO" id="GO:0004765">
    <property type="term" value="F:shikimate kinase activity"/>
    <property type="evidence" value="ECO:0007669"/>
    <property type="project" value="UniProtKB-UniRule"/>
</dbReference>
<dbReference type="GO" id="GO:0008652">
    <property type="term" value="P:amino acid biosynthetic process"/>
    <property type="evidence" value="ECO:0007669"/>
    <property type="project" value="UniProtKB-KW"/>
</dbReference>
<dbReference type="GO" id="GO:0009073">
    <property type="term" value="P:aromatic amino acid family biosynthetic process"/>
    <property type="evidence" value="ECO:0007669"/>
    <property type="project" value="UniProtKB-KW"/>
</dbReference>
<dbReference type="GO" id="GO:0009423">
    <property type="term" value="P:chorismate biosynthetic process"/>
    <property type="evidence" value="ECO:0007669"/>
    <property type="project" value="UniProtKB-UniRule"/>
</dbReference>
<dbReference type="CDD" id="cd00464">
    <property type="entry name" value="SK"/>
    <property type="match status" value="1"/>
</dbReference>
<dbReference type="FunFam" id="3.40.50.300:FF:000099">
    <property type="entry name" value="Shikimate kinase 1"/>
    <property type="match status" value="1"/>
</dbReference>
<dbReference type="Gene3D" id="3.40.50.300">
    <property type="entry name" value="P-loop containing nucleotide triphosphate hydrolases"/>
    <property type="match status" value="1"/>
</dbReference>
<dbReference type="HAMAP" id="MF_00109">
    <property type="entry name" value="Shikimate_kinase"/>
    <property type="match status" value="1"/>
</dbReference>
<dbReference type="InterPro" id="IPR027417">
    <property type="entry name" value="P-loop_NTPase"/>
</dbReference>
<dbReference type="InterPro" id="IPR031322">
    <property type="entry name" value="Shikimate/glucono_kinase"/>
</dbReference>
<dbReference type="InterPro" id="IPR000623">
    <property type="entry name" value="Shikimate_kinase/TSH1"/>
</dbReference>
<dbReference type="InterPro" id="IPR023000">
    <property type="entry name" value="Shikimate_kinase_CS"/>
</dbReference>
<dbReference type="NCBIfam" id="NF003456">
    <property type="entry name" value="PRK05057.1"/>
    <property type="match status" value="1"/>
</dbReference>
<dbReference type="PANTHER" id="PTHR21087">
    <property type="entry name" value="SHIKIMATE KINASE"/>
    <property type="match status" value="1"/>
</dbReference>
<dbReference type="PANTHER" id="PTHR21087:SF16">
    <property type="entry name" value="SHIKIMATE KINASE 1, CHLOROPLASTIC"/>
    <property type="match status" value="1"/>
</dbReference>
<dbReference type="Pfam" id="PF01202">
    <property type="entry name" value="SKI"/>
    <property type="match status" value="1"/>
</dbReference>
<dbReference type="PRINTS" id="PR01100">
    <property type="entry name" value="SHIKIMTKNASE"/>
</dbReference>
<dbReference type="SUPFAM" id="SSF52540">
    <property type="entry name" value="P-loop containing nucleoside triphosphate hydrolases"/>
    <property type="match status" value="1"/>
</dbReference>
<dbReference type="PROSITE" id="PS01128">
    <property type="entry name" value="SHIKIMATE_KINASE"/>
    <property type="match status" value="1"/>
</dbReference>
<organism>
    <name type="scientific">Yersinia pestis bv. Antiqua (strain Nepal516)</name>
    <dbReference type="NCBI Taxonomy" id="377628"/>
    <lineage>
        <taxon>Bacteria</taxon>
        <taxon>Pseudomonadati</taxon>
        <taxon>Pseudomonadota</taxon>
        <taxon>Gammaproteobacteria</taxon>
        <taxon>Enterobacterales</taxon>
        <taxon>Yersiniaceae</taxon>
        <taxon>Yersinia</taxon>
    </lineage>
</organism>
<accession>Q1CCN9</accession>
<accession>D1Q2T1</accession>
<sequence length="173" mass="19532">MAEKRNIFLVGPMGAGKSTIGRQLAQQLNMEFFDSDQEIERRTGADVGWVFDVEGEEGFRDREEKVINELTEKQGIVLATGGGSVKSRETRNRLSARGVVVYLETTIEKQLARTQRDKKRPLLQVDEPPREVLEALAKERNPLYEEIADVTIRTDDQSAKVVANQIINMLESN</sequence>
<evidence type="ECO:0000255" key="1">
    <source>
        <dbReference type="HAMAP-Rule" id="MF_00109"/>
    </source>
</evidence>
<gene>
    <name evidence="1" type="primary">aroK</name>
    <name type="ordered locus">YPN_3914</name>
    <name type="ORF">YP516_4444</name>
</gene>
<protein>
    <recommendedName>
        <fullName evidence="1">Shikimate kinase 1</fullName>
        <shortName evidence="1">SK 1</shortName>
        <ecNumber evidence="1">2.7.1.71</ecNumber>
    </recommendedName>
</protein>
<comment type="function">
    <text evidence="1">Catalyzes the specific phosphorylation of the 3-hydroxyl group of shikimic acid using ATP as a cosubstrate.</text>
</comment>
<comment type="catalytic activity">
    <reaction evidence="1">
        <text>shikimate + ATP = 3-phosphoshikimate + ADP + H(+)</text>
        <dbReference type="Rhea" id="RHEA:13121"/>
        <dbReference type="ChEBI" id="CHEBI:15378"/>
        <dbReference type="ChEBI" id="CHEBI:30616"/>
        <dbReference type="ChEBI" id="CHEBI:36208"/>
        <dbReference type="ChEBI" id="CHEBI:145989"/>
        <dbReference type="ChEBI" id="CHEBI:456216"/>
        <dbReference type="EC" id="2.7.1.71"/>
    </reaction>
</comment>
<comment type="cofactor">
    <cofactor evidence="1">
        <name>Mg(2+)</name>
        <dbReference type="ChEBI" id="CHEBI:18420"/>
    </cofactor>
    <text evidence="1">Binds 1 Mg(2+) ion per subunit.</text>
</comment>
<comment type="pathway">
    <text evidence="1">Metabolic intermediate biosynthesis; chorismate biosynthesis; chorismate from D-erythrose 4-phosphate and phosphoenolpyruvate: step 5/7.</text>
</comment>
<comment type="subunit">
    <text evidence="1">Monomer.</text>
</comment>
<comment type="subcellular location">
    <subcellularLocation>
        <location evidence="1">Cytoplasm</location>
    </subcellularLocation>
</comment>
<comment type="similarity">
    <text evidence="1">Belongs to the shikimate kinase family.</text>
</comment>
<name>AROK_YERPN</name>
<feature type="chain" id="PRO_1000023008" description="Shikimate kinase 1">
    <location>
        <begin position="1"/>
        <end position="173"/>
    </location>
</feature>
<feature type="binding site" evidence="1">
    <location>
        <begin position="14"/>
        <end position="19"/>
    </location>
    <ligand>
        <name>ATP</name>
        <dbReference type="ChEBI" id="CHEBI:30616"/>
    </ligand>
</feature>
<feature type="binding site" evidence="1">
    <location>
        <position position="18"/>
    </location>
    <ligand>
        <name>Mg(2+)</name>
        <dbReference type="ChEBI" id="CHEBI:18420"/>
    </ligand>
</feature>
<feature type="binding site" evidence="1">
    <location>
        <position position="36"/>
    </location>
    <ligand>
        <name>substrate</name>
    </ligand>
</feature>
<feature type="binding site" evidence="1">
    <location>
        <position position="60"/>
    </location>
    <ligand>
        <name>substrate</name>
    </ligand>
</feature>
<feature type="binding site" evidence="1">
    <location>
        <position position="82"/>
    </location>
    <ligand>
        <name>substrate</name>
    </ligand>
</feature>
<feature type="binding site" evidence="1">
    <location>
        <position position="120"/>
    </location>
    <ligand>
        <name>ATP</name>
        <dbReference type="ChEBI" id="CHEBI:30616"/>
    </ligand>
</feature>
<feature type="binding site" evidence="1">
    <location>
        <position position="140"/>
    </location>
    <ligand>
        <name>substrate</name>
    </ligand>
</feature>
<feature type="binding site" evidence="1">
    <location>
        <position position="157"/>
    </location>
    <ligand>
        <name>ATP</name>
        <dbReference type="ChEBI" id="CHEBI:30616"/>
    </ligand>
</feature>
<reference key="1">
    <citation type="journal article" date="2006" name="J. Bacteriol.">
        <title>Complete genome sequence of Yersinia pestis strains Antiqua and Nepal516: evidence of gene reduction in an emerging pathogen.</title>
        <authorList>
            <person name="Chain P.S.G."/>
            <person name="Hu P."/>
            <person name="Malfatti S.A."/>
            <person name="Radnedge L."/>
            <person name="Larimer F."/>
            <person name="Vergez L.M."/>
            <person name="Worsham P."/>
            <person name="Chu M.C."/>
            <person name="Andersen G.L."/>
        </authorList>
    </citation>
    <scope>NUCLEOTIDE SEQUENCE [LARGE SCALE GENOMIC DNA]</scope>
    <source>
        <strain>Nepal516</strain>
    </source>
</reference>
<reference key="2">
    <citation type="submission" date="2009-04" db="EMBL/GenBank/DDBJ databases">
        <title>Yersinia pestis Nepal516A whole genome shotgun sequencing project.</title>
        <authorList>
            <person name="Plunkett G. III"/>
            <person name="Anderson B.D."/>
            <person name="Baumler D.J."/>
            <person name="Burland V."/>
            <person name="Cabot E.L."/>
            <person name="Glasner J.D."/>
            <person name="Mau B."/>
            <person name="Neeno-Eckwall E."/>
            <person name="Perna N.T."/>
            <person name="Munk A.C."/>
            <person name="Tapia R."/>
            <person name="Green L.D."/>
            <person name="Rogers Y.C."/>
            <person name="Detter J.C."/>
            <person name="Bruce D.C."/>
            <person name="Brettin T.S."/>
        </authorList>
    </citation>
    <scope>NUCLEOTIDE SEQUENCE [LARGE SCALE GENOMIC DNA]</scope>
    <source>
        <strain>Nepal516</strain>
    </source>
</reference>
<keyword id="KW-0028">Amino-acid biosynthesis</keyword>
<keyword id="KW-0057">Aromatic amino acid biosynthesis</keyword>
<keyword id="KW-0067">ATP-binding</keyword>
<keyword id="KW-0963">Cytoplasm</keyword>
<keyword id="KW-0418">Kinase</keyword>
<keyword id="KW-0460">Magnesium</keyword>
<keyword id="KW-0479">Metal-binding</keyword>
<keyword id="KW-0547">Nucleotide-binding</keyword>
<keyword id="KW-0808">Transferase</keyword>